<gene>
    <name evidence="1" type="primary">murG</name>
    <name type="ordered locus">HCH_05883</name>
</gene>
<accession>Q2S9Z2</accession>
<keyword id="KW-0131">Cell cycle</keyword>
<keyword id="KW-0132">Cell division</keyword>
<keyword id="KW-0997">Cell inner membrane</keyword>
<keyword id="KW-1003">Cell membrane</keyword>
<keyword id="KW-0133">Cell shape</keyword>
<keyword id="KW-0961">Cell wall biogenesis/degradation</keyword>
<keyword id="KW-0328">Glycosyltransferase</keyword>
<keyword id="KW-0472">Membrane</keyword>
<keyword id="KW-0573">Peptidoglycan synthesis</keyword>
<keyword id="KW-1185">Reference proteome</keyword>
<keyword id="KW-0808">Transferase</keyword>
<protein>
    <recommendedName>
        <fullName evidence="1">UDP-N-acetylglucosamine--N-acetylmuramyl-(pentapeptide) pyrophosphoryl-undecaprenol N-acetylglucosamine transferase</fullName>
        <ecNumber evidence="1">2.4.1.227</ecNumber>
    </recommendedName>
    <alternativeName>
        <fullName evidence="1">Undecaprenyl-PP-MurNAc-pentapeptide-UDPGlcNAc GlcNAc transferase</fullName>
    </alternativeName>
</protein>
<sequence length="360" mass="38039">MSGKTFLVMAGGTGGHVYPALASALALREQGANVVWLGARGGMEERIIGRTDIPMRLITIGGLRGKGVAALLMAPVNLVRALWQAFSVFRKEKPDCVLGMGGFASGPGGIVACLTGTPLVIHEQNAIAGMTNRWLARGARYVLEAFPQTFAQAQSVVTVGNPVRDELAALPSPQERGIGARKPTLLILGGSRGALALNEAAPKAIAALPETLRPRVVHQAGEGKDQTCRELYASLGVEAEVYDFLQDMASVYANADLALCRAGALTLAELCTVGLGALLAPYPHAVDDHQTANARHLEQAGAAKIFQQDNLTVERLAETLTSLLGQPQKLLDMANAARTLAKPEATREVVKYCWEACAND</sequence>
<proteinExistence type="inferred from homology"/>
<reference key="1">
    <citation type="journal article" date="2005" name="Nucleic Acids Res.">
        <title>Genomic blueprint of Hahella chejuensis, a marine microbe producing an algicidal agent.</title>
        <authorList>
            <person name="Jeong H."/>
            <person name="Yim J.H."/>
            <person name="Lee C."/>
            <person name="Choi S.-H."/>
            <person name="Park Y.K."/>
            <person name="Yoon S.H."/>
            <person name="Hur C.-G."/>
            <person name="Kang H.-Y."/>
            <person name="Kim D."/>
            <person name="Lee H.H."/>
            <person name="Park K.H."/>
            <person name="Park S.-H."/>
            <person name="Park H.-S."/>
            <person name="Lee H.K."/>
            <person name="Oh T.K."/>
            <person name="Kim J.F."/>
        </authorList>
    </citation>
    <scope>NUCLEOTIDE SEQUENCE [LARGE SCALE GENOMIC DNA]</scope>
    <source>
        <strain>KCTC 2396</strain>
    </source>
</reference>
<organism>
    <name type="scientific">Hahella chejuensis (strain KCTC 2396)</name>
    <dbReference type="NCBI Taxonomy" id="349521"/>
    <lineage>
        <taxon>Bacteria</taxon>
        <taxon>Pseudomonadati</taxon>
        <taxon>Pseudomonadota</taxon>
        <taxon>Gammaproteobacteria</taxon>
        <taxon>Oceanospirillales</taxon>
        <taxon>Hahellaceae</taxon>
        <taxon>Hahella</taxon>
    </lineage>
</organism>
<feature type="chain" id="PRO_0000315100" description="UDP-N-acetylglucosamine--N-acetylmuramyl-(pentapeptide) pyrophosphoryl-undecaprenol N-acetylglucosamine transferase">
    <location>
        <begin position="1"/>
        <end position="360"/>
    </location>
</feature>
<feature type="binding site" evidence="1">
    <location>
        <begin position="13"/>
        <end position="15"/>
    </location>
    <ligand>
        <name>UDP-N-acetyl-alpha-D-glucosamine</name>
        <dbReference type="ChEBI" id="CHEBI:57705"/>
    </ligand>
</feature>
<feature type="binding site" evidence="1">
    <location>
        <position position="125"/>
    </location>
    <ligand>
        <name>UDP-N-acetyl-alpha-D-glucosamine</name>
        <dbReference type="ChEBI" id="CHEBI:57705"/>
    </ligand>
</feature>
<feature type="binding site" evidence="1">
    <location>
        <position position="164"/>
    </location>
    <ligand>
        <name>UDP-N-acetyl-alpha-D-glucosamine</name>
        <dbReference type="ChEBI" id="CHEBI:57705"/>
    </ligand>
</feature>
<feature type="binding site" evidence="1">
    <location>
        <position position="191"/>
    </location>
    <ligand>
        <name>UDP-N-acetyl-alpha-D-glucosamine</name>
        <dbReference type="ChEBI" id="CHEBI:57705"/>
    </ligand>
</feature>
<feature type="binding site" evidence="1">
    <location>
        <position position="290"/>
    </location>
    <ligand>
        <name>UDP-N-acetyl-alpha-D-glucosamine</name>
        <dbReference type="ChEBI" id="CHEBI:57705"/>
    </ligand>
</feature>
<comment type="function">
    <text evidence="1">Cell wall formation. Catalyzes the transfer of a GlcNAc subunit on undecaprenyl-pyrophosphoryl-MurNAc-pentapeptide (lipid intermediate I) to form undecaprenyl-pyrophosphoryl-MurNAc-(pentapeptide)GlcNAc (lipid intermediate II).</text>
</comment>
<comment type="catalytic activity">
    <reaction evidence="1">
        <text>di-trans,octa-cis-undecaprenyl diphospho-N-acetyl-alpha-D-muramoyl-L-alanyl-D-glutamyl-meso-2,6-diaminopimeloyl-D-alanyl-D-alanine + UDP-N-acetyl-alpha-D-glucosamine = di-trans,octa-cis-undecaprenyl diphospho-[N-acetyl-alpha-D-glucosaminyl-(1-&gt;4)]-N-acetyl-alpha-D-muramoyl-L-alanyl-D-glutamyl-meso-2,6-diaminopimeloyl-D-alanyl-D-alanine + UDP + H(+)</text>
        <dbReference type="Rhea" id="RHEA:31227"/>
        <dbReference type="ChEBI" id="CHEBI:15378"/>
        <dbReference type="ChEBI" id="CHEBI:57705"/>
        <dbReference type="ChEBI" id="CHEBI:58223"/>
        <dbReference type="ChEBI" id="CHEBI:61387"/>
        <dbReference type="ChEBI" id="CHEBI:61388"/>
        <dbReference type="EC" id="2.4.1.227"/>
    </reaction>
</comment>
<comment type="pathway">
    <text evidence="1">Cell wall biogenesis; peptidoglycan biosynthesis.</text>
</comment>
<comment type="subcellular location">
    <subcellularLocation>
        <location evidence="1">Cell inner membrane</location>
        <topology evidence="1">Peripheral membrane protein</topology>
        <orientation evidence="1">Cytoplasmic side</orientation>
    </subcellularLocation>
</comment>
<comment type="similarity">
    <text evidence="1">Belongs to the glycosyltransferase 28 family. MurG subfamily.</text>
</comment>
<evidence type="ECO:0000255" key="1">
    <source>
        <dbReference type="HAMAP-Rule" id="MF_00033"/>
    </source>
</evidence>
<name>MURG_HAHCH</name>
<dbReference type="EC" id="2.4.1.227" evidence="1"/>
<dbReference type="EMBL" id="CP000155">
    <property type="protein sequence ID" value="ABC32532.1"/>
    <property type="molecule type" value="Genomic_DNA"/>
</dbReference>
<dbReference type="RefSeq" id="WP_011399591.1">
    <property type="nucleotide sequence ID" value="NC_007645.1"/>
</dbReference>
<dbReference type="SMR" id="Q2S9Z2"/>
<dbReference type="STRING" id="349521.HCH_05883"/>
<dbReference type="CAZy" id="GT28">
    <property type="family name" value="Glycosyltransferase Family 28"/>
</dbReference>
<dbReference type="KEGG" id="hch:HCH_05883"/>
<dbReference type="eggNOG" id="COG0707">
    <property type="taxonomic scope" value="Bacteria"/>
</dbReference>
<dbReference type="HOGENOM" id="CLU_037404_2_0_6"/>
<dbReference type="OrthoDB" id="9808936at2"/>
<dbReference type="UniPathway" id="UPA00219"/>
<dbReference type="Proteomes" id="UP000000238">
    <property type="component" value="Chromosome"/>
</dbReference>
<dbReference type="GO" id="GO:0005886">
    <property type="term" value="C:plasma membrane"/>
    <property type="evidence" value="ECO:0007669"/>
    <property type="project" value="UniProtKB-SubCell"/>
</dbReference>
<dbReference type="GO" id="GO:0051991">
    <property type="term" value="F:UDP-N-acetyl-D-glucosamine:N-acetylmuramoyl-L-alanyl-D-glutamyl-meso-2,6-diaminopimelyl-D-alanyl-D-alanine-diphosphoundecaprenol 4-beta-N-acetylglucosaminlytransferase activity"/>
    <property type="evidence" value="ECO:0007669"/>
    <property type="project" value="RHEA"/>
</dbReference>
<dbReference type="GO" id="GO:0050511">
    <property type="term" value="F:undecaprenyldiphospho-muramoylpentapeptide beta-N-acetylglucosaminyltransferase activity"/>
    <property type="evidence" value="ECO:0007669"/>
    <property type="project" value="UniProtKB-UniRule"/>
</dbReference>
<dbReference type="GO" id="GO:0005975">
    <property type="term" value="P:carbohydrate metabolic process"/>
    <property type="evidence" value="ECO:0007669"/>
    <property type="project" value="InterPro"/>
</dbReference>
<dbReference type="GO" id="GO:0051301">
    <property type="term" value="P:cell division"/>
    <property type="evidence" value="ECO:0007669"/>
    <property type="project" value="UniProtKB-KW"/>
</dbReference>
<dbReference type="GO" id="GO:0071555">
    <property type="term" value="P:cell wall organization"/>
    <property type="evidence" value="ECO:0007669"/>
    <property type="project" value="UniProtKB-KW"/>
</dbReference>
<dbReference type="GO" id="GO:0030259">
    <property type="term" value="P:lipid glycosylation"/>
    <property type="evidence" value="ECO:0007669"/>
    <property type="project" value="UniProtKB-UniRule"/>
</dbReference>
<dbReference type="GO" id="GO:0009252">
    <property type="term" value="P:peptidoglycan biosynthetic process"/>
    <property type="evidence" value="ECO:0007669"/>
    <property type="project" value="UniProtKB-UniRule"/>
</dbReference>
<dbReference type="GO" id="GO:0008360">
    <property type="term" value="P:regulation of cell shape"/>
    <property type="evidence" value="ECO:0007669"/>
    <property type="project" value="UniProtKB-KW"/>
</dbReference>
<dbReference type="CDD" id="cd03785">
    <property type="entry name" value="GT28_MurG"/>
    <property type="match status" value="1"/>
</dbReference>
<dbReference type="Gene3D" id="3.40.50.2000">
    <property type="entry name" value="Glycogen Phosphorylase B"/>
    <property type="match status" value="2"/>
</dbReference>
<dbReference type="HAMAP" id="MF_00033">
    <property type="entry name" value="MurG"/>
    <property type="match status" value="1"/>
</dbReference>
<dbReference type="InterPro" id="IPR006009">
    <property type="entry name" value="GlcNAc_MurG"/>
</dbReference>
<dbReference type="InterPro" id="IPR007235">
    <property type="entry name" value="Glyco_trans_28_C"/>
</dbReference>
<dbReference type="InterPro" id="IPR004276">
    <property type="entry name" value="GlycoTrans_28_N"/>
</dbReference>
<dbReference type="NCBIfam" id="TIGR01133">
    <property type="entry name" value="murG"/>
    <property type="match status" value="1"/>
</dbReference>
<dbReference type="PANTHER" id="PTHR21015:SF22">
    <property type="entry name" value="GLYCOSYLTRANSFERASE"/>
    <property type="match status" value="1"/>
</dbReference>
<dbReference type="PANTHER" id="PTHR21015">
    <property type="entry name" value="UDP-N-ACETYLGLUCOSAMINE--N-ACETYLMURAMYL-(PENTAPEPTIDE) PYROPHOSPHORYL-UNDECAPRENOL N-ACETYLGLUCOSAMINE TRANSFERASE 1"/>
    <property type="match status" value="1"/>
</dbReference>
<dbReference type="Pfam" id="PF04101">
    <property type="entry name" value="Glyco_tran_28_C"/>
    <property type="match status" value="1"/>
</dbReference>
<dbReference type="Pfam" id="PF03033">
    <property type="entry name" value="Glyco_transf_28"/>
    <property type="match status" value="1"/>
</dbReference>
<dbReference type="SUPFAM" id="SSF53756">
    <property type="entry name" value="UDP-Glycosyltransferase/glycogen phosphorylase"/>
    <property type="match status" value="1"/>
</dbReference>